<evidence type="ECO:0000250" key="1"/>
<evidence type="ECO:0000305" key="2"/>
<comment type="function">
    <text>Degrades all aldehydes potentially generated by N dealkylation of thiocarbamates and may also participate in ethanolamine metabolism and further assimilation of degradation products by thiocarbamate-induced cytochrome P-450.</text>
</comment>
<comment type="catalytic activity">
    <reaction>
        <text>an aldehyde + NAD(+) + H2O = a carboxylate + NADH + 2 H(+)</text>
        <dbReference type="Rhea" id="RHEA:16185"/>
        <dbReference type="ChEBI" id="CHEBI:15377"/>
        <dbReference type="ChEBI" id="CHEBI:15378"/>
        <dbReference type="ChEBI" id="CHEBI:17478"/>
        <dbReference type="ChEBI" id="CHEBI:29067"/>
        <dbReference type="ChEBI" id="CHEBI:57540"/>
        <dbReference type="ChEBI" id="CHEBI:57945"/>
        <dbReference type="EC" id="1.2.1.3"/>
    </reaction>
</comment>
<comment type="induction">
    <text>By EPTC (S-ethyl dipropylcarbamothioate).</text>
</comment>
<comment type="similarity">
    <text evidence="2">Belongs to the aldehyde dehydrogenase family.</text>
</comment>
<accession>P46369</accession>
<gene>
    <name type="primary">thcA</name>
</gene>
<reference key="1">
    <citation type="journal article" date="1995" name="J. Bacteriol.">
        <title>Degradation of the thiocarbamate herbicide EPTC (S-ethyl dipropylcarbamothioate) and biosafening by Rhodococcus sp. strain NI86/21 involve an inducible cytochrome P-450 system and aldehyde dehydrogenase.</title>
        <authorList>
            <person name="Nagy I."/>
            <person name="Schoofs G."/>
            <person name="Compernolle F."/>
            <person name="Proost P."/>
            <person name="Vanderleyden J."/>
            <person name="de Mot R."/>
        </authorList>
    </citation>
    <scope>NUCLEOTIDE SEQUENCE [GENOMIC DNA]</scope>
    <scope>PARTIAL PROTEIN SEQUENCE</scope>
    <source>
        <strain>NI86/21</strain>
    </source>
</reference>
<keyword id="KW-0903">Direct protein sequencing</keyword>
<keyword id="KW-0520">NAD</keyword>
<keyword id="KW-0560">Oxidoreductase</keyword>
<organism>
    <name type="scientific">Rhodococcus erythropolis</name>
    <name type="common">Arthrobacter picolinophilus</name>
    <dbReference type="NCBI Taxonomy" id="1833"/>
    <lineage>
        <taxon>Bacteria</taxon>
        <taxon>Bacillati</taxon>
        <taxon>Actinomycetota</taxon>
        <taxon>Actinomycetes</taxon>
        <taxon>Mycobacteriales</taxon>
        <taxon>Nocardiaceae</taxon>
        <taxon>Rhodococcus</taxon>
        <taxon>Rhodococcus erythropolis group</taxon>
    </lineage>
</organism>
<dbReference type="EC" id="1.2.1.3"/>
<dbReference type="EMBL" id="U17129">
    <property type="protein sequence ID" value="AAC77472.1"/>
    <property type="molecule type" value="Genomic_DNA"/>
</dbReference>
<dbReference type="SMR" id="P46369"/>
<dbReference type="STRING" id="1833.XU06_08920"/>
<dbReference type="GO" id="GO:0004029">
    <property type="term" value="F:aldehyde dehydrogenase (NAD+) activity"/>
    <property type="evidence" value="ECO:0007669"/>
    <property type="project" value="UniProtKB-EC"/>
</dbReference>
<dbReference type="FunFam" id="3.40.605.10:FF:000001">
    <property type="entry name" value="Aldehyde dehydrogenase 1"/>
    <property type="match status" value="1"/>
</dbReference>
<dbReference type="FunFam" id="3.40.309.10:FF:000017">
    <property type="entry name" value="Aldehyde dehydrogenase B"/>
    <property type="match status" value="1"/>
</dbReference>
<dbReference type="Gene3D" id="3.40.605.10">
    <property type="entry name" value="Aldehyde Dehydrogenase, Chain A, domain 1"/>
    <property type="match status" value="1"/>
</dbReference>
<dbReference type="Gene3D" id="3.40.309.10">
    <property type="entry name" value="Aldehyde Dehydrogenase, Chain A, domain 2"/>
    <property type="match status" value="1"/>
</dbReference>
<dbReference type="InterPro" id="IPR016161">
    <property type="entry name" value="Ald_DH/histidinol_DH"/>
</dbReference>
<dbReference type="InterPro" id="IPR016163">
    <property type="entry name" value="Ald_DH_C"/>
</dbReference>
<dbReference type="InterPro" id="IPR016160">
    <property type="entry name" value="Ald_DH_CS_CYS"/>
</dbReference>
<dbReference type="InterPro" id="IPR029510">
    <property type="entry name" value="Ald_DH_CS_GLU"/>
</dbReference>
<dbReference type="InterPro" id="IPR016162">
    <property type="entry name" value="Ald_DH_N"/>
</dbReference>
<dbReference type="InterPro" id="IPR015590">
    <property type="entry name" value="Aldehyde_DH_dom"/>
</dbReference>
<dbReference type="PANTHER" id="PTHR43111">
    <property type="entry name" value="ALDEHYDE DEHYDROGENASE B-RELATED"/>
    <property type="match status" value="1"/>
</dbReference>
<dbReference type="PANTHER" id="PTHR43111:SF1">
    <property type="entry name" value="ALDEHYDE DEHYDROGENASE B-RELATED"/>
    <property type="match status" value="1"/>
</dbReference>
<dbReference type="Pfam" id="PF00171">
    <property type="entry name" value="Aldedh"/>
    <property type="match status" value="1"/>
</dbReference>
<dbReference type="SUPFAM" id="SSF53720">
    <property type="entry name" value="ALDH-like"/>
    <property type="match status" value="1"/>
</dbReference>
<dbReference type="PROSITE" id="PS00070">
    <property type="entry name" value="ALDEHYDE_DEHYDR_CYS"/>
    <property type="match status" value="1"/>
</dbReference>
<dbReference type="PROSITE" id="PS00687">
    <property type="entry name" value="ALDEHYDE_DEHYDR_GLU"/>
    <property type="match status" value="1"/>
</dbReference>
<name>THCA_RHOER</name>
<proteinExistence type="evidence at protein level"/>
<feature type="initiator methionine" description="Removed">
    <location>
        <position position="1"/>
    </location>
</feature>
<feature type="chain" id="PRO_0000056453" description="EPTC-inducible aldehyde dehydrogenase">
    <location>
        <begin position="2"/>
        <end position="506"/>
    </location>
</feature>
<feature type="active site" evidence="1">
    <location>
        <position position="263"/>
    </location>
</feature>
<feature type="active site" evidence="1">
    <location>
        <position position="302"/>
    </location>
</feature>
<feature type="binding site" evidence="1">
    <location>
        <begin position="219"/>
        <end position="225"/>
    </location>
    <ligand>
        <name>NAD(+)</name>
        <dbReference type="ChEBI" id="CHEBI:57540"/>
    </ligand>
</feature>
<sequence>MTKYARPGTADAIMSFQSRYDNWIGNEWVAPVKGQYFENPTPVTGQNFCDVARSTAEDIELALDAAHAAAPAWGKTSVAERAIILNKIADRMEENLESIALAESWDNGKPIRETLNADIPLAIDHFRYFAGAIRAQEGSLSEINSDTVAYHFHEPLGVVGQIIPWNFPILMAVWKLAPALAAGNAIVLKPAEQTPVSILHLIGIIGDLLPAGVLNIVNGFGVEAGKPLASSPRIKKIAFTGETTTGRLIMQYASQNLIPVTLELGGKSPNVFFSDVLASNDDYQDKALEGFTMFALNQGEVCTAPSRALIQEDIFDEFLAMAAIRTKAVRQGDPLDTDTMIGAQASNDQLEKILSYIEIGKAEGAKVITGGERAELGGDLSGGYYVQPTVFTGNNKMRIFQEIFGPVVSVTSFKDYDEAIEIANDTLYGLGAGVWSRDGGVAYRAGRDIQAGRVWTNTYHQYPAHAAFGGYKQSGIGRENHLMMLSHYQQTKNLLVSYAQKAQGFF</sequence>
<protein>
    <recommendedName>
        <fullName>EPTC-inducible aldehyde dehydrogenase</fullName>
        <ecNumber>1.2.1.3</ecNumber>
    </recommendedName>
</protein>